<accession>B5Y1E0</accession>
<name>XGPT_KLEP3</name>
<evidence type="ECO:0000255" key="1">
    <source>
        <dbReference type="HAMAP-Rule" id="MF_01903"/>
    </source>
</evidence>
<organism>
    <name type="scientific">Klebsiella pneumoniae (strain 342)</name>
    <dbReference type="NCBI Taxonomy" id="507522"/>
    <lineage>
        <taxon>Bacteria</taxon>
        <taxon>Pseudomonadati</taxon>
        <taxon>Pseudomonadota</taxon>
        <taxon>Gammaproteobacteria</taxon>
        <taxon>Enterobacterales</taxon>
        <taxon>Enterobacteriaceae</taxon>
        <taxon>Klebsiella/Raoultella group</taxon>
        <taxon>Klebsiella</taxon>
        <taxon>Klebsiella pneumoniae complex</taxon>
    </lineage>
</organism>
<proteinExistence type="inferred from homology"/>
<reference key="1">
    <citation type="journal article" date="2008" name="PLoS Genet.">
        <title>Complete genome sequence of the N2-fixing broad host range endophyte Klebsiella pneumoniae 342 and virulence predictions verified in mice.</title>
        <authorList>
            <person name="Fouts D.E."/>
            <person name="Tyler H.L."/>
            <person name="DeBoy R.T."/>
            <person name="Daugherty S."/>
            <person name="Ren Q."/>
            <person name="Badger J.H."/>
            <person name="Durkin A.S."/>
            <person name="Huot H."/>
            <person name="Shrivastava S."/>
            <person name="Kothari S."/>
            <person name="Dodson R.J."/>
            <person name="Mohamoud Y."/>
            <person name="Khouri H."/>
            <person name="Roesch L.F.W."/>
            <person name="Krogfelt K.A."/>
            <person name="Struve C."/>
            <person name="Triplett E.W."/>
            <person name="Methe B.A."/>
        </authorList>
    </citation>
    <scope>NUCLEOTIDE SEQUENCE [LARGE SCALE GENOMIC DNA]</scope>
    <source>
        <strain>342</strain>
    </source>
</reference>
<keyword id="KW-0997">Cell inner membrane</keyword>
<keyword id="KW-1003">Cell membrane</keyword>
<keyword id="KW-0328">Glycosyltransferase</keyword>
<keyword id="KW-0460">Magnesium</keyword>
<keyword id="KW-0472">Membrane</keyword>
<keyword id="KW-0479">Metal-binding</keyword>
<keyword id="KW-0660">Purine salvage</keyword>
<keyword id="KW-0808">Transferase</keyword>
<protein>
    <recommendedName>
        <fullName evidence="1">Xanthine-guanine phosphoribosyltransferase</fullName>
        <shortName evidence="1">XGPRT</shortName>
        <ecNumber evidence="1">2.4.2.-</ecNumber>
        <ecNumber evidence="1">2.4.2.22</ecNumber>
    </recommendedName>
    <alternativeName>
        <fullName evidence="1">Xanthine phosphoribosyltransferase</fullName>
    </alternativeName>
</protein>
<feature type="chain" id="PRO_1000188750" description="Xanthine-guanine phosphoribosyltransferase">
    <location>
        <begin position="1"/>
        <end position="152"/>
    </location>
</feature>
<feature type="binding site" evidence="1">
    <location>
        <begin position="37"/>
        <end position="38"/>
    </location>
    <ligand>
        <name>5-phospho-alpha-D-ribose 1-diphosphate</name>
        <dbReference type="ChEBI" id="CHEBI:58017"/>
    </ligand>
</feature>
<feature type="binding site" evidence="1">
    <location>
        <position position="69"/>
    </location>
    <ligand>
        <name>5-phospho-alpha-D-ribose 1-diphosphate</name>
        <dbReference type="ChEBI" id="CHEBI:58017"/>
    </ligand>
</feature>
<feature type="binding site" evidence="1">
    <location>
        <position position="69"/>
    </location>
    <ligand>
        <name>GMP</name>
        <dbReference type="ChEBI" id="CHEBI:58115"/>
    </ligand>
</feature>
<feature type="binding site" evidence="1">
    <location>
        <begin position="88"/>
        <end position="96"/>
    </location>
    <ligand>
        <name>5-phospho-alpha-D-ribose 1-diphosphate</name>
        <dbReference type="ChEBI" id="CHEBI:58017"/>
    </ligand>
</feature>
<feature type="binding site" evidence="1">
    <location>
        <position position="89"/>
    </location>
    <ligand>
        <name>Mg(2+)</name>
        <dbReference type="ChEBI" id="CHEBI:18420"/>
    </ligand>
</feature>
<feature type="binding site" evidence="1">
    <location>
        <begin position="92"/>
        <end position="96"/>
    </location>
    <ligand>
        <name>GMP</name>
        <dbReference type="ChEBI" id="CHEBI:58115"/>
    </ligand>
</feature>
<feature type="binding site" evidence="1">
    <location>
        <position position="92"/>
    </location>
    <ligand>
        <name>guanine</name>
        <dbReference type="ChEBI" id="CHEBI:16235"/>
    </ligand>
</feature>
<feature type="binding site" evidence="1">
    <location>
        <position position="92"/>
    </location>
    <ligand>
        <name>xanthine</name>
        <dbReference type="ChEBI" id="CHEBI:17712"/>
    </ligand>
</feature>
<feature type="binding site" evidence="1">
    <location>
        <begin position="134"/>
        <end position="135"/>
    </location>
    <ligand>
        <name>GMP</name>
        <dbReference type="ChEBI" id="CHEBI:58115"/>
    </ligand>
</feature>
<feature type="binding site" evidence="1">
    <location>
        <position position="135"/>
    </location>
    <ligand>
        <name>guanine</name>
        <dbReference type="ChEBI" id="CHEBI:16235"/>
    </ligand>
</feature>
<feature type="binding site" evidence="1">
    <location>
        <position position="135"/>
    </location>
    <ligand>
        <name>xanthine</name>
        <dbReference type="ChEBI" id="CHEBI:17712"/>
    </ligand>
</feature>
<comment type="function">
    <text evidence="1">Purine salvage pathway enzyme that catalyzes the transfer of the ribosyl-5-phosphate group from 5-phospho-alpha-D-ribose 1-diphosphate (PRPP) to the N9 position of the 6-oxopurines guanine and xanthine to form the corresponding ribonucleotides GMP (guanosine 5'-monophosphate) and XMP (xanthosine 5'-monophosphate), with the release of PPi. To a lesser extent, also acts on hypoxanthine.</text>
</comment>
<comment type="catalytic activity">
    <reaction evidence="1">
        <text>GMP + diphosphate = guanine + 5-phospho-alpha-D-ribose 1-diphosphate</text>
        <dbReference type="Rhea" id="RHEA:25424"/>
        <dbReference type="ChEBI" id="CHEBI:16235"/>
        <dbReference type="ChEBI" id="CHEBI:33019"/>
        <dbReference type="ChEBI" id="CHEBI:58017"/>
        <dbReference type="ChEBI" id="CHEBI:58115"/>
    </reaction>
    <physiologicalReaction direction="right-to-left" evidence="1">
        <dbReference type="Rhea" id="RHEA:25426"/>
    </physiologicalReaction>
</comment>
<comment type="catalytic activity">
    <reaction evidence="1">
        <text>XMP + diphosphate = xanthine + 5-phospho-alpha-D-ribose 1-diphosphate</text>
        <dbReference type="Rhea" id="RHEA:10800"/>
        <dbReference type="ChEBI" id="CHEBI:17712"/>
        <dbReference type="ChEBI" id="CHEBI:33019"/>
        <dbReference type="ChEBI" id="CHEBI:57464"/>
        <dbReference type="ChEBI" id="CHEBI:58017"/>
        <dbReference type="EC" id="2.4.2.22"/>
    </reaction>
    <physiologicalReaction direction="right-to-left" evidence="1">
        <dbReference type="Rhea" id="RHEA:10802"/>
    </physiologicalReaction>
</comment>
<comment type="catalytic activity">
    <reaction evidence="1">
        <text>IMP + diphosphate = hypoxanthine + 5-phospho-alpha-D-ribose 1-diphosphate</text>
        <dbReference type="Rhea" id="RHEA:17973"/>
        <dbReference type="ChEBI" id="CHEBI:17368"/>
        <dbReference type="ChEBI" id="CHEBI:33019"/>
        <dbReference type="ChEBI" id="CHEBI:58017"/>
        <dbReference type="ChEBI" id="CHEBI:58053"/>
    </reaction>
    <physiologicalReaction direction="right-to-left" evidence="1">
        <dbReference type="Rhea" id="RHEA:17975"/>
    </physiologicalReaction>
</comment>
<comment type="cofactor">
    <cofactor evidence="1">
        <name>Mg(2+)</name>
        <dbReference type="ChEBI" id="CHEBI:18420"/>
    </cofactor>
</comment>
<comment type="pathway">
    <text evidence="1">Purine metabolism; GMP biosynthesis via salvage pathway; GMP from guanine: step 1/1.</text>
</comment>
<comment type="pathway">
    <text evidence="1">Purine metabolism; XMP biosynthesis via salvage pathway; XMP from xanthine: step 1/1.</text>
</comment>
<comment type="subunit">
    <text evidence="1">Homotetramer.</text>
</comment>
<comment type="subcellular location">
    <subcellularLocation>
        <location evidence="1">Cell inner membrane</location>
        <topology evidence="1">Peripheral membrane protein</topology>
    </subcellularLocation>
</comment>
<comment type="similarity">
    <text evidence="1">Belongs to the purine/pyrimidine phosphoribosyltransferase family. XGPT subfamily.</text>
</comment>
<dbReference type="EC" id="2.4.2.-" evidence="1"/>
<dbReference type="EC" id="2.4.2.22" evidence="1"/>
<dbReference type="EMBL" id="CP000964">
    <property type="protein sequence ID" value="ACI07675.1"/>
    <property type="molecule type" value="Genomic_DNA"/>
</dbReference>
<dbReference type="SMR" id="B5Y1E0"/>
<dbReference type="KEGG" id="kpe:KPK_4482"/>
<dbReference type="HOGENOM" id="CLU_080904_3_0_6"/>
<dbReference type="UniPathway" id="UPA00602">
    <property type="reaction ID" value="UER00658"/>
</dbReference>
<dbReference type="UniPathway" id="UPA00909">
    <property type="reaction ID" value="UER00887"/>
</dbReference>
<dbReference type="Proteomes" id="UP000001734">
    <property type="component" value="Chromosome"/>
</dbReference>
<dbReference type="GO" id="GO:0005829">
    <property type="term" value="C:cytosol"/>
    <property type="evidence" value="ECO:0007669"/>
    <property type="project" value="TreeGrafter"/>
</dbReference>
<dbReference type="GO" id="GO:0005886">
    <property type="term" value="C:plasma membrane"/>
    <property type="evidence" value="ECO:0007669"/>
    <property type="project" value="UniProtKB-SubCell"/>
</dbReference>
<dbReference type="GO" id="GO:0052657">
    <property type="term" value="F:guanine phosphoribosyltransferase activity"/>
    <property type="evidence" value="ECO:0007669"/>
    <property type="project" value="RHEA"/>
</dbReference>
<dbReference type="GO" id="GO:0004422">
    <property type="term" value="F:hypoxanthine phosphoribosyltransferase activity"/>
    <property type="evidence" value="ECO:0007669"/>
    <property type="project" value="TreeGrafter"/>
</dbReference>
<dbReference type="GO" id="GO:0000287">
    <property type="term" value="F:magnesium ion binding"/>
    <property type="evidence" value="ECO:0007669"/>
    <property type="project" value="UniProtKB-UniRule"/>
</dbReference>
<dbReference type="GO" id="GO:0000310">
    <property type="term" value="F:xanthine phosphoribosyltransferase activity"/>
    <property type="evidence" value="ECO:0007669"/>
    <property type="project" value="UniProtKB-UniRule"/>
</dbReference>
<dbReference type="GO" id="GO:0032263">
    <property type="term" value="P:GMP salvage"/>
    <property type="evidence" value="ECO:0007669"/>
    <property type="project" value="UniProtKB-UniRule"/>
</dbReference>
<dbReference type="GO" id="GO:0032264">
    <property type="term" value="P:IMP salvage"/>
    <property type="evidence" value="ECO:0007669"/>
    <property type="project" value="TreeGrafter"/>
</dbReference>
<dbReference type="GO" id="GO:0006166">
    <property type="term" value="P:purine ribonucleoside salvage"/>
    <property type="evidence" value="ECO:0007669"/>
    <property type="project" value="UniProtKB-KW"/>
</dbReference>
<dbReference type="GO" id="GO:0032265">
    <property type="term" value="P:XMP salvage"/>
    <property type="evidence" value="ECO:0007669"/>
    <property type="project" value="UniProtKB-UniRule"/>
</dbReference>
<dbReference type="CDD" id="cd06223">
    <property type="entry name" value="PRTases_typeI"/>
    <property type="match status" value="1"/>
</dbReference>
<dbReference type="FunFam" id="3.40.50.2020:FF:000009">
    <property type="entry name" value="Xanthine phosphoribosyltransferase"/>
    <property type="match status" value="1"/>
</dbReference>
<dbReference type="Gene3D" id="3.40.50.2020">
    <property type="match status" value="1"/>
</dbReference>
<dbReference type="HAMAP" id="MF_01903">
    <property type="entry name" value="XGPRT"/>
    <property type="match status" value="1"/>
</dbReference>
<dbReference type="InterPro" id="IPR000836">
    <property type="entry name" value="PRibTrfase_dom"/>
</dbReference>
<dbReference type="InterPro" id="IPR029057">
    <property type="entry name" value="PRTase-like"/>
</dbReference>
<dbReference type="InterPro" id="IPR023747">
    <property type="entry name" value="Xanthine_Guanine_PRibTrfase"/>
</dbReference>
<dbReference type="NCBIfam" id="NF006613">
    <property type="entry name" value="PRK09177.1"/>
    <property type="match status" value="1"/>
</dbReference>
<dbReference type="PANTHER" id="PTHR39563">
    <property type="entry name" value="XANTHINE PHOSPHORIBOSYLTRANSFERASE"/>
    <property type="match status" value="1"/>
</dbReference>
<dbReference type="PANTHER" id="PTHR39563:SF1">
    <property type="entry name" value="XANTHINE-GUANINE PHOSPHORIBOSYLTRANSFERASE"/>
    <property type="match status" value="1"/>
</dbReference>
<dbReference type="Pfam" id="PF00156">
    <property type="entry name" value="Pribosyltran"/>
    <property type="match status" value="1"/>
</dbReference>
<dbReference type="SUPFAM" id="SSF53271">
    <property type="entry name" value="PRTase-like"/>
    <property type="match status" value="1"/>
</dbReference>
<dbReference type="PROSITE" id="PS00103">
    <property type="entry name" value="PUR_PYR_PR_TRANSFER"/>
    <property type="match status" value="1"/>
</dbReference>
<gene>
    <name evidence="1" type="primary">gpt</name>
    <name type="ordered locus">KPK_4482</name>
</gene>
<sequence length="152" mass="16935">MSEKYVVTWDMLQIHARKLASRLLPVEQWKGIIAVSRGGLVPGALLARELGIRHVDTVCISSYDHDNQRELKVLKRAEGDGEGFIVIDDLVDTGGTAVAIREMYPKAHFVTIFAKPAGRPLVDDYVVDIPQDTWIEQPWDMGVVFVPPIAGR</sequence>